<gene>
    <name type="primary">rnf43</name>
</gene>
<reference key="1">
    <citation type="journal article" date="2010" name="Science">
        <title>The genome of the Western clawed frog Xenopus tropicalis.</title>
        <authorList>
            <person name="Hellsten U."/>
            <person name="Harland R.M."/>
            <person name="Gilchrist M.J."/>
            <person name="Hendrix D."/>
            <person name="Jurka J."/>
            <person name="Kapitonov V."/>
            <person name="Ovcharenko I."/>
            <person name="Putnam N.H."/>
            <person name="Shu S."/>
            <person name="Taher L."/>
            <person name="Blitz I.L."/>
            <person name="Blumberg B."/>
            <person name="Dichmann D.S."/>
            <person name="Dubchak I."/>
            <person name="Amaya E."/>
            <person name="Detter J.C."/>
            <person name="Fletcher R."/>
            <person name="Gerhard D.S."/>
            <person name="Goodstein D."/>
            <person name="Graves T."/>
            <person name="Grigoriev I.V."/>
            <person name="Grimwood J."/>
            <person name="Kawashima T."/>
            <person name="Lindquist E."/>
            <person name="Lucas S.M."/>
            <person name="Mead P.E."/>
            <person name="Mitros T."/>
            <person name="Ogino H."/>
            <person name="Ohta Y."/>
            <person name="Poliakov A.V."/>
            <person name="Pollet N."/>
            <person name="Robert J."/>
            <person name="Salamov A."/>
            <person name="Sater A.K."/>
            <person name="Schmutz J."/>
            <person name="Terry A."/>
            <person name="Vize P.D."/>
            <person name="Warren W.C."/>
            <person name="Wells D."/>
            <person name="Wills A."/>
            <person name="Wilson R.K."/>
            <person name="Zimmerman L.B."/>
            <person name="Zorn A.M."/>
            <person name="Grainger R."/>
            <person name="Grammer T."/>
            <person name="Khokha M.K."/>
            <person name="Richardson P.M."/>
            <person name="Rokhsar D.S."/>
        </authorList>
    </citation>
    <scope>NUCLEOTIDE SEQUENCE [LARGE SCALE GENOMIC DNA]</scope>
</reference>
<reference key="2">
    <citation type="journal article" date="2018" name="Nature">
        <title>RSPO2 inhibition of RNF43 and ZNRF3 governs limb development independently of LGR4/5/6.</title>
        <authorList>
            <person name="Szenker-Ravi E."/>
            <person name="Altunoglu U."/>
            <person name="Leushacke M."/>
            <person name="Bosso-Lefevre C."/>
            <person name="Khatoo M."/>
            <person name="Thi Tran H."/>
            <person name="Naert T."/>
            <person name="Noelanders R."/>
            <person name="Hajamohideen A."/>
            <person name="Beneteau C."/>
            <person name="de Sousa S.B."/>
            <person name="Karaman B."/>
            <person name="Latypova X."/>
            <person name="Basaran S."/>
            <person name="Yuecel E.B."/>
            <person name="Tan T.T."/>
            <person name="Vlaminck L."/>
            <person name="Nayak S.S."/>
            <person name="Shukla A."/>
            <person name="Girisha K.M."/>
            <person name="Le Caignec C."/>
            <person name="Soshnikova N."/>
            <person name="Uyguner Z.O."/>
            <person name="Vleminckx K."/>
            <person name="Barker N."/>
            <person name="Kayserili H."/>
            <person name="Reversade B."/>
        </authorList>
    </citation>
    <scope>FUNCTION</scope>
    <scope>DEVELOPMENTAL STAGE</scope>
    <scope>DISRUPTION PHENOTYPE</scope>
</reference>
<dbReference type="EC" id="2.3.2.27"/>
<dbReference type="EMBL" id="CM004444">
    <property type="status" value="NOT_ANNOTATED_CDS"/>
    <property type="molecule type" value="Genomic_DNA"/>
</dbReference>
<dbReference type="RefSeq" id="XP_002935238.2">
    <property type="nucleotide sequence ID" value="XM_002935192.5"/>
</dbReference>
<dbReference type="SMR" id="P0DPR2"/>
<dbReference type="FunCoup" id="P0DPR2">
    <property type="interactions" value="763"/>
</dbReference>
<dbReference type="STRING" id="8364.ENSXETP00000026492"/>
<dbReference type="GlyCosmos" id="P0DPR2">
    <property type="glycosylation" value="2 sites, No reported glycans"/>
</dbReference>
<dbReference type="GeneID" id="100491274"/>
<dbReference type="KEGG" id="xtr:100491274"/>
<dbReference type="AGR" id="Xenbase:XB-GENE-952685"/>
<dbReference type="CTD" id="54894"/>
<dbReference type="Xenbase" id="XB-GENE-952685">
    <property type="gene designation" value="rnf43"/>
</dbReference>
<dbReference type="InParanoid" id="P0DPR2"/>
<dbReference type="OMA" id="PAVHFHQ"/>
<dbReference type="OrthoDB" id="8062037at2759"/>
<dbReference type="Reactome" id="R-XTR-4641263">
    <property type="pathway name" value="Regulation of FZD by ubiquitination"/>
</dbReference>
<dbReference type="UniPathway" id="UPA00143"/>
<dbReference type="Proteomes" id="UP000008143">
    <property type="component" value="Chromosome 2"/>
</dbReference>
<dbReference type="Bgee" id="ENSXETG00000037241">
    <property type="expression patterns" value="Expressed in neurula embryo and 12 other cell types or tissues"/>
</dbReference>
<dbReference type="ExpressionAtlas" id="P0DPR2">
    <property type="expression patterns" value="baseline and differential"/>
</dbReference>
<dbReference type="GO" id="GO:0005789">
    <property type="term" value="C:endoplasmic reticulum membrane"/>
    <property type="evidence" value="ECO:0007669"/>
    <property type="project" value="UniProtKB-SubCell"/>
</dbReference>
<dbReference type="GO" id="GO:0005635">
    <property type="term" value="C:nuclear envelope"/>
    <property type="evidence" value="ECO:0007669"/>
    <property type="project" value="UniProtKB-SubCell"/>
</dbReference>
<dbReference type="GO" id="GO:0005886">
    <property type="term" value="C:plasma membrane"/>
    <property type="evidence" value="ECO:0007669"/>
    <property type="project" value="UniProtKB-SubCell"/>
</dbReference>
<dbReference type="GO" id="GO:0016740">
    <property type="term" value="F:transferase activity"/>
    <property type="evidence" value="ECO:0007669"/>
    <property type="project" value="UniProtKB-KW"/>
</dbReference>
<dbReference type="GO" id="GO:0008270">
    <property type="term" value="F:zinc ion binding"/>
    <property type="evidence" value="ECO:0007669"/>
    <property type="project" value="UniProtKB-KW"/>
</dbReference>
<dbReference type="GO" id="GO:0030178">
    <property type="term" value="P:negative regulation of Wnt signaling pathway"/>
    <property type="evidence" value="ECO:0007669"/>
    <property type="project" value="UniProtKB-ARBA"/>
</dbReference>
<dbReference type="GO" id="GO:0016567">
    <property type="term" value="P:protein ubiquitination"/>
    <property type="evidence" value="ECO:0007669"/>
    <property type="project" value="UniProtKB-UniPathway"/>
</dbReference>
<dbReference type="GO" id="GO:0016055">
    <property type="term" value="P:Wnt signaling pathway"/>
    <property type="evidence" value="ECO:0007669"/>
    <property type="project" value="UniProtKB-KW"/>
</dbReference>
<dbReference type="CDD" id="cd16666">
    <property type="entry name" value="RING-H2_RNF43-like"/>
    <property type="match status" value="1"/>
</dbReference>
<dbReference type="FunFam" id="3.50.30.30:FF:000015">
    <property type="entry name" value="Putative e3 ubiquitin-protein ligase rnf43"/>
    <property type="match status" value="1"/>
</dbReference>
<dbReference type="Gene3D" id="3.50.30.30">
    <property type="match status" value="1"/>
</dbReference>
<dbReference type="Gene3D" id="3.30.40.10">
    <property type="entry name" value="Zinc/RING finger domain, C3HC4 (zinc finger)"/>
    <property type="match status" value="1"/>
</dbReference>
<dbReference type="InterPro" id="IPR001841">
    <property type="entry name" value="Znf_RING"/>
</dbReference>
<dbReference type="InterPro" id="IPR013083">
    <property type="entry name" value="Znf_RING/FYVE/PHD"/>
</dbReference>
<dbReference type="InterPro" id="IPR040700">
    <property type="entry name" value="ZNRF-3_ecto"/>
</dbReference>
<dbReference type="InterPro" id="IPR051073">
    <property type="entry name" value="ZNRF3_Arkadia_E3_ligases"/>
</dbReference>
<dbReference type="PANTHER" id="PTHR16200">
    <property type="entry name" value="RING ZINC FINGER"/>
    <property type="match status" value="1"/>
</dbReference>
<dbReference type="Pfam" id="PF13639">
    <property type="entry name" value="zf-RING_2"/>
    <property type="match status" value="1"/>
</dbReference>
<dbReference type="Pfam" id="PF18212">
    <property type="entry name" value="ZNRF_3_ecto"/>
    <property type="match status" value="1"/>
</dbReference>
<dbReference type="SMART" id="SM00184">
    <property type="entry name" value="RING"/>
    <property type="match status" value="1"/>
</dbReference>
<dbReference type="SUPFAM" id="SSF57850">
    <property type="entry name" value="RING/U-box"/>
    <property type="match status" value="1"/>
</dbReference>
<dbReference type="PROSITE" id="PS50089">
    <property type="entry name" value="ZF_RING_2"/>
    <property type="match status" value="1"/>
</dbReference>
<sequence length="689" mass="76971">MNRARLQLASLWLLLTVTLQAVASAMGTTEREMDVKALIRVTPLQAEESGGVGQGNLTLEGLFARVAEISPAEGRLLQFHPLSLCNTSEDDQTKPGFISIVKLETPDRDTQPCLSLANKARLAGERGAHAVLFDITNDRGALQQLQQPAGINQPVVLIWGPDAEKLMDVVNKNKEALVKIEVQEQPKWLHHDIWILLTVAGTVMFFVLYAVARLLCRQPPPQDSIQQQTLLAISRLGTRRYQQRMLKDQRASGGWVETASTSSSVPVCAICLEEFTDGQELRILPCCHEYHLGCVDPWLRQNHTCPLCMYDILDSGTPPRPLAHRAPSQTQLWGRYPGSARLMSHLPPHGTPMVFPTPNNSLFLPRAPYYLDHTHHWQMPEQMAMQMRTHRRGAEGTRELGISPGCQDSSGYLPDDPGSDSSSGPCHGSSSENCTDISLHCLHGTSSSSVHSSQSNQEDSSPPALASYLLPQGELPALNPLLSTQASYASHVHFHQHRHHHYRRNQPSMSHSHPHRSKRRTKVSRADPSYYREHRHTTGANGELRSLMVRREPRPSCSRTCFDPRTNREHPRHQQSMPQAASVVQGSSEPDVATSLRGSRTDPPSRTYRKKKSSAPSHLPLLYSPRHCHPANSVQMSESSHPRWAEEVRLLHSRVNSHRENTAMMHLYHPPHHNQGATEEIEAVCEHAV</sequence>
<comment type="function">
    <text evidence="1 6">E3 ubiquitin-protein ligase that acts as a negative regulator of the Wnt signaling pathway by mediating the ubiquitination, endocytosis and subsequent degradation of Wnt receptor complex components Frizzled. Acts on both canonical and non-canonical Wnt signaling pathway (By similarity). Along with RSPO2 and ZNRF3, constitutes a master switch that governs limb specification (PubMed:29769720).</text>
</comment>
<comment type="catalytic activity">
    <reaction evidence="1">
        <text>S-ubiquitinyl-[E2 ubiquitin-conjugating enzyme]-L-cysteine + [acceptor protein]-L-lysine = [E2 ubiquitin-conjugating enzyme]-L-cysteine + N(6)-ubiquitinyl-[acceptor protein]-L-lysine.</text>
        <dbReference type="EC" id="2.3.2.27"/>
    </reaction>
</comment>
<comment type="pathway">
    <text evidence="1">Protein modification; protein ubiquitination.</text>
</comment>
<comment type="subcellular location">
    <subcellularLocation>
        <location evidence="1">Cell membrane</location>
        <topology evidence="1">Single-pass type I membrane protein</topology>
    </subcellularLocation>
    <subcellularLocation>
        <location evidence="1">Endoplasmic reticulum membrane</location>
        <topology evidence="1">Single-pass type I membrane protein</topology>
    </subcellularLocation>
    <subcellularLocation>
        <location evidence="1">Nucleus envelope</location>
    </subcellularLocation>
</comment>
<comment type="disruption phenotype">
    <text evidence="6">Simultaneous knockdown of RNF43 and ZNRF3 results in ectopic limb development.</text>
</comment>
<comment type="similarity">
    <text evidence="7">Belongs to the ZNRF3 family.</text>
</comment>
<protein>
    <recommendedName>
        <fullName>E3 ubiquitin-protein ligase RNF43</fullName>
        <ecNumber>2.3.2.27</ecNumber>
    </recommendedName>
    <alternativeName>
        <fullName>RING finger protein 43</fullName>
    </alternativeName>
    <alternativeName>
        <fullName>RING-type E3 ubiquitin transferase RNF43</fullName>
    </alternativeName>
</protein>
<accession>P0DPR2</accession>
<feature type="signal peptide" evidence="2">
    <location>
        <begin position="1"/>
        <end position="27"/>
    </location>
</feature>
<feature type="chain" id="PRO_0000445702" description="E3 ubiquitin-protein ligase RNF43">
    <location>
        <begin position="28"/>
        <end position="689"/>
    </location>
</feature>
<feature type="topological domain" description="Extracellular" evidence="7">
    <location>
        <begin position="28"/>
        <end position="191"/>
    </location>
</feature>
<feature type="transmembrane region" description="Helical" evidence="2">
    <location>
        <begin position="192"/>
        <end position="212"/>
    </location>
</feature>
<feature type="topological domain" description="Cytoplasmic" evidence="7">
    <location>
        <begin position="213"/>
        <end position="689"/>
    </location>
</feature>
<feature type="zinc finger region" description="RING-type; atypical" evidence="3">
    <location>
        <begin position="268"/>
        <end position="308"/>
    </location>
</feature>
<feature type="region of interest" description="Disordered" evidence="5">
    <location>
        <begin position="386"/>
        <end position="430"/>
    </location>
</feature>
<feature type="region of interest" description="Disordered" evidence="5">
    <location>
        <begin position="445"/>
        <end position="467"/>
    </location>
</feature>
<feature type="region of interest" description="Disordered" evidence="5">
    <location>
        <begin position="492"/>
        <end position="639"/>
    </location>
</feature>
<feature type="compositionally biased region" description="Low complexity" evidence="5">
    <location>
        <begin position="408"/>
        <end position="430"/>
    </location>
</feature>
<feature type="compositionally biased region" description="Low complexity" evidence="5">
    <location>
        <begin position="446"/>
        <end position="461"/>
    </location>
</feature>
<feature type="compositionally biased region" description="Basic residues" evidence="5">
    <location>
        <begin position="492"/>
        <end position="504"/>
    </location>
</feature>
<feature type="compositionally biased region" description="Basic residues" evidence="5">
    <location>
        <begin position="512"/>
        <end position="523"/>
    </location>
</feature>
<feature type="compositionally biased region" description="Polar residues" evidence="5">
    <location>
        <begin position="574"/>
        <end position="588"/>
    </location>
</feature>
<feature type="glycosylation site" description="N-linked (GlcNAc...) asparagine" evidence="4">
    <location>
        <position position="56"/>
    </location>
</feature>
<feature type="glycosylation site" description="N-linked (GlcNAc...) asparagine" evidence="4">
    <location>
        <position position="86"/>
    </location>
</feature>
<feature type="disulfide bond" evidence="1">
    <location>
        <begin position="85"/>
        <end position="113"/>
    </location>
</feature>
<organism>
    <name type="scientific">Xenopus tropicalis</name>
    <name type="common">Western clawed frog</name>
    <name type="synonym">Silurana tropicalis</name>
    <dbReference type="NCBI Taxonomy" id="8364"/>
    <lineage>
        <taxon>Eukaryota</taxon>
        <taxon>Metazoa</taxon>
        <taxon>Chordata</taxon>
        <taxon>Craniata</taxon>
        <taxon>Vertebrata</taxon>
        <taxon>Euteleostomi</taxon>
        <taxon>Amphibia</taxon>
        <taxon>Batrachia</taxon>
        <taxon>Anura</taxon>
        <taxon>Pipoidea</taxon>
        <taxon>Pipidae</taxon>
        <taxon>Xenopodinae</taxon>
        <taxon>Xenopus</taxon>
        <taxon>Silurana</taxon>
    </lineage>
</organism>
<name>RNF43_XENTR</name>
<keyword id="KW-1003">Cell membrane</keyword>
<keyword id="KW-0217">Developmental protein</keyword>
<keyword id="KW-1015">Disulfide bond</keyword>
<keyword id="KW-0256">Endoplasmic reticulum</keyword>
<keyword id="KW-0325">Glycoprotein</keyword>
<keyword id="KW-0472">Membrane</keyword>
<keyword id="KW-0479">Metal-binding</keyword>
<keyword id="KW-0539">Nucleus</keyword>
<keyword id="KW-1185">Reference proteome</keyword>
<keyword id="KW-0732">Signal</keyword>
<keyword id="KW-0808">Transferase</keyword>
<keyword id="KW-0812">Transmembrane</keyword>
<keyword id="KW-1133">Transmembrane helix</keyword>
<keyword id="KW-0833">Ubl conjugation pathway</keyword>
<keyword id="KW-0879">Wnt signaling pathway</keyword>
<keyword id="KW-0862">Zinc</keyword>
<keyword id="KW-0863">Zinc-finger</keyword>
<evidence type="ECO:0000250" key="1">
    <source>
        <dbReference type="UniProtKB" id="Q68DV7"/>
    </source>
</evidence>
<evidence type="ECO:0000255" key="2"/>
<evidence type="ECO:0000255" key="3">
    <source>
        <dbReference type="PROSITE-ProRule" id="PRU00175"/>
    </source>
</evidence>
<evidence type="ECO:0000255" key="4">
    <source>
        <dbReference type="PROSITE-ProRule" id="PRU00498"/>
    </source>
</evidence>
<evidence type="ECO:0000256" key="5">
    <source>
        <dbReference type="SAM" id="MobiDB-lite"/>
    </source>
</evidence>
<evidence type="ECO:0000269" key="6">
    <source>
    </source>
</evidence>
<evidence type="ECO:0000305" key="7"/>
<proteinExistence type="evidence at transcript level"/>